<proteinExistence type="inferred from homology"/>
<keyword id="KW-0963">Cytoplasm</keyword>
<keyword id="KW-0255">Endonuclease</keyword>
<keyword id="KW-0378">Hydrolase</keyword>
<keyword id="KW-0479">Metal-binding</keyword>
<keyword id="KW-0540">Nuclease</keyword>
<name>PELO_SACI4</name>
<evidence type="ECO:0000255" key="1">
    <source>
        <dbReference type="HAMAP-Rule" id="MF_01853"/>
    </source>
</evidence>
<organism>
    <name type="scientific">Saccharolobus islandicus (strain M.14.25 / Kamchatka #1)</name>
    <name type="common">Sulfolobus islandicus</name>
    <dbReference type="NCBI Taxonomy" id="427317"/>
    <lineage>
        <taxon>Archaea</taxon>
        <taxon>Thermoproteota</taxon>
        <taxon>Thermoprotei</taxon>
        <taxon>Sulfolobales</taxon>
        <taxon>Sulfolobaceae</taxon>
        <taxon>Saccharolobus</taxon>
    </lineage>
</organism>
<dbReference type="EC" id="3.1.-.-" evidence="1"/>
<dbReference type="EMBL" id="CP001400">
    <property type="protein sequence ID" value="ACP38779.1"/>
    <property type="molecule type" value="Genomic_DNA"/>
</dbReference>
<dbReference type="RefSeq" id="WP_012712005.1">
    <property type="nucleotide sequence ID" value="NC_012588.1"/>
</dbReference>
<dbReference type="SMR" id="C3MYZ5"/>
<dbReference type="KEGG" id="sia:M1425_2038"/>
<dbReference type="HOGENOM" id="CLU_023334_0_0_2"/>
<dbReference type="Proteomes" id="UP000001350">
    <property type="component" value="Chromosome"/>
</dbReference>
<dbReference type="GO" id="GO:0005737">
    <property type="term" value="C:cytoplasm"/>
    <property type="evidence" value="ECO:0007669"/>
    <property type="project" value="UniProtKB-SubCell"/>
</dbReference>
<dbReference type="GO" id="GO:0004519">
    <property type="term" value="F:endonuclease activity"/>
    <property type="evidence" value="ECO:0007669"/>
    <property type="project" value="UniProtKB-UniRule"/>
</dbReference>
<dbReference type="GO" id="GO:0046872">
    <property type="term" value="F:metal ion binding"/>
    <property type="evidence" value="ECO:0007669"/>
    <property type="project" value="UniProtKB-UniRule"/>
</dbReference>
<dbReference type="GO" id="GO:0070651">
    <property type="term" value="P:nonfunctional rRNA decay"/>
    <property type="evidence" value="ECO:0007669"/>
    <property type="project" value="TreeGrafter"/>
</dbReference>
<dbReference type="GO" id="GO:0070966">
    <property type="term" value="P:nuclear-transcribed mRNA catabolic process, no-go decay"/>
    <property type="evidence" value="ECO:0007669"/>
    <property type="project" value="InterPro"/>
</dbReference>
<dbReference type="GO" id="GO:0070481">
    <property type="term" value="P:nuclear-transcribed mRNA catabolic process, non-stop decay"/>
    <property type="evidence" value="ECO:0007669"/>
    <property type="project" value="InterPro"/>
</dbReference>
<dbReference type="GO" id="GO:0032790">
    <property type="term" value="P:ribosome disassembly"/>
    <property type="evidence" value="ECO:0007669"/>
    <property type="project" value="TreeGrafter"/>
</dbReference>
<dbReference type="GO" id="GO:0071025">
    <property type="term" value="P:RNA surveillance"/>
    <property type="evidence" value="ECO:0007669"/>
    <property type="project" value="InterPro"/>
</dbReference>
<dbReference type="FunFam" id="2.30.30.870:FF:000002">
    <property type="entry name" value="Protein pelota homolog"/>
    <property type="match status" value="1"/>
</dbReference>
<dbReference type="FunFam" id="3.30.420.60:FF:000005">
    <property type="entry name" value="Protein pelota homolog"/>
    <property type="match status" value="1"/>
</dbReference>
<dbReference type="Gene3D" id="3.30.1330.30">
    <property type="match status" value="1"/>
</dbReference>
<dbReference type="Gene3D" id="3.30.420.60">
    <property type="entry name" value="eRF1 domain 2"/>
    <property type="match status" value="1"/>
</dbReference>
<dbReference type="Gene3D" id="2.30.30.870">
    <property type="entry name" value="Pelota, domain A"/>
    <property type="match status" value="1"/>
</dbReference>
<dbReference type="HAMAP" id="MF_01853">
    <property type="entry name" value="PelO"/>
    <property type="match status" value="1"/>
</dbReference>
<dbReference type="InterPro" id="IPR042226">
    <property type="entry name" value="eFR1_2_sf"/>
</dbReference>
<dbReference type="InterPro" id="IPR005140">
    <property type="entry name" value="eRF1_1_Pelota"/>
</dbReference>
<dbReference type="InterPro" id="IPR005142">
    <property type="entry name" value="eRF1_3"/>
</dbReference>
<dbReference type="InterPro" id="IPR038069">
    <property type="entry name" value="Pelota/DOM34_N"/>
</dbReference>
<dbReference type="InterPro" id="IPR023521">
    <property type="entry name" value="Pelota_arc"/>
</dbReference>
<dbReference type="InterPro" id="IPR029064">
    <property type="entry name" value="Ribosomal_eL30-like_sf"/>
</dbReference>
<dbReference type="InterPro" id="IPR004405">
    <property type="entry name" value="Transl-rel_pelota"/>
</dbReference>
<dbReference type="NCBIfam" id="TIGR00111">
    <property type="entry name" value="pelota"/>
    <property type="match status" value="1"/>
</dbReference>
<dbReference type="PANTHER" id="PTHR10853">
    <property type="entry name" value="PELOTA"/>
    <property type="match status" value="1"/>
</dbReference>
<dbReference type="PANTHER" id="PTHR10853:SF0">
    <property type="entry name" value="PROTEIN PELOTA HOMOLOG"/>
    <property type="match status" value="1"/>
</dbReference>
<dbReference type="Pfam" id="PF03463">
    <property type="entry name" value="eRF1_1"/>
    <property type="match status" value="1"/>
</dbReference>
<dbReference type="Pfam" id="PF03465">
    <property type="entry name" value="eRF1_3"/>
    <property type="match status" value="1"/>
</dbReference>
<dbReference type="SMART" id="SM01194">
    <property type="entry name" value="eRF1_1"/>
    <property type="match status" value="1"/>
</dbReference>
<dbReference type="SUPFAM" id="SSF159065">
    <property type="entry name" value="Dom34/Pelota N-terminal domain-like"/>
    <property type="match status" value="1"/>
</dbReference>
<dbReference type="SUPFAM" id="SSF55315">
    <property type="entry name" value="L30e-like"/>
    <property type="match status" value="1"/>
</dbReference>
<dbReference type="SUPFAM" id="SSF53137">
    <property type="entry name" value="Translational machinery components"/>
    <property type="match status" value="1"/>
</dbReference>
<accession>C3MYZ5</accession>
<gene>
    <name evidence="1" type="primary">pelA</name>
    <name type="ordered locus">M1425_2038</name>
</gene>
<reference key="1">
    <citation type="journal article" date="2009" name="Proc. Natl. Acad. Sci. U.S.A.">
        <title>Biogeography of the Sulfolobus islandicus pan-genome.</title>
        <authorList>
            <person name="Reno M.L."/>
            <person name="Held N.L."/>
            <person name="Fields C.J."/>
            <person name="Burke P.V."/>
            <person name="Whitaker R.J."/>
        </authorList>
    </citation>
    <scope>NUCLEOTIDE SEQUENCE [LARGE SCALE GENOMIC DNA]</scope>
    <source>
        <strain>M.14.25 / Kamchatka #1</strain>
    </source>
</reference>
<protein>
    <recommendedName>
        <fullName evidence="1">Protein pelota homolog</fullName>
        <ecNumber evidence="1">3.1.-.-</ecNumber>
    </recommendedName>
</protein>
<sequence length="344" mass="39372">MRILEFDEKRQAAKLHIESEDDLWILHLILEKGDKVVAKTTRDIGLGKESRRIPMTIVLKVDYTEFQEFTNRLRIHGIIEDAPERFGIRGAHHTINLDIGDEIIIIKQQWSKYALDKLKKQADKRSKIIIALVDFDEYLIAIPFEQGIKILSEKSLRSLNEEEGIIEQNALEVATELAEYVKQYNPDAILLAGPGFFKEEVAKKVNNILKNKKVYIDSVSSATRAGLHEILKRDIIDKIMSDYEIAIGAKKMEKAMELLAKQPELVTYGLEQVKNAVEMGAVETVLLIEDLLSSNNQERLAIERILEDIENKRGEIILVPKESPIYFELKNLTGILAILRFRIN</sequence>
<comment type="function">
    <text evidence="1">May function in recognizing stalled ribosomes, interact with stem-loop structures in stalled mRNA molecules, and effect endonucleolytic cleavage of the mRNA. May play a role in the release non-functional ribosomes and degradation of damaged mRNAs. Has endoribonuclease activity.</text>
</comment>
<comment type="cofactor">
    <cofactor evidence="1">
        <name>a divalent metal cation</name>
        <dbReference type="ChEBI" id="CHEBI:60240"/>
    </cofactor>
</comment>
<comment type="subunit">
    <text evidence="1">Monomer.</text>
</comment>
<comment type="subcellular location">
    <subcellularLocation>
        <location evidence="1">Cytoplasm</location>
    </subcellularLocation>
</comment>
<comment type="domain">
    <text evidence="1">The N-terminal domain has the RNA-binding Sm fold. It harbors the endoribonuclease activity.</text>
</comment>
<comment type="similarity">
    <text evidence="1">Belongs to the eukaryotic release factor 1 family. Pelota subfamily.</text>
</comment>
<feature type="chain" id="PRO_1000216141" description="Protein pelota homolog">
    <location>
        <begin position="1"/>
        <end position="344"/>
    </location>
</feature>